<feature type="chain" id="PRO_0000216206" description="UPF0181 protein VVA0806">
    <location>
        <begin position="1"/>
        <end position="51"/>
    </location>
</feature>
<evidence type="ECO:0000255" key="1">
    <source>
        <dbReference type="HAMAP-Rule" id="MF_00507"/>
    </source>
</evidence>
<comment type="similarity">
    <text evidence="1">Belongs to the UPF0181 family.</text>
</comment>
<dbReference type="EMBL" id="BA000038">
    <property type="protein sequence ID" value="BAC96832.1"/>
    <property type="molecule type" value="Genomic_DNA"/>
</dbReference>
<dbReference type="RefSeq" id="WP_011152125.1">
    <property type="nucleotide sequence ID" value="NC_005140.1"/>
</dbReference>
<dbReference type="SMR" id="Q7ME78"/>
<dbReference type="STRING" id="672.VV93_v1c38130"/>
<dbReference type="KEGG" id="vvy:VVA0806"/>
<dbReference type="eggNOG" id="COG3140">
    <property type="taxonomic scope" value="Bacteria"/>
</dbReference>
<dbReference type="HOGENOM" id="CLU_185263_1_0_6"/>
<dbReference type="Proteomes" id="UP000002675">
    <property type="component" value="Chromosome II"/>
</dbReference>
<dbReference type="HAMAP" id="MF_00507">
    <property type="entry name" value="UPF0181"/>
    <property type="match status" value="1"/>
</dbReference>
<dbReference type="InterPro" id="IPR005371">
    <property type="entry name" value="UPF0181"/>
</dbReference>
<dbReference type="NCBIfam" id="NF003476">
    <property type="entry name" value="PRK05114.1"/>
    <property type="match status" value="1"/>
</dbReference>
<dbReference type="Pfam" id="PF03701">
    <property type="entry name" value="UPF0181"/>
    <property type="match status" value="1"/>
</dbReference>
<sequence>MFDDLPPLSHQEQQRAVEEIQKLMAEGMSTAQAIKIIAEKIRAEHKAQSAE</sequence>
<proteinExistence type="inferred from homology"/>
<gene>
    <name type="ordered locus">VVA0806</name>
</gene>
<protein>
    <recommendedName>
        <fullName evidence="1">UPF0181 protein VVA0806</fullName>
    </recommendedName>
</protein>
<organism>
    <name type="scientific">Vibrio vulnificus (strain YJ016)</name>
    <dbReference type="NCBI Taxonomy" id="196600"/>
    <lineage>
        <taxon>Bacteria</taxon>
        <taxon>Pseudomonadati</taxon>
        <taxon>Pseudomonadota</taxon>
        <taxon>Gammaproteobacteria</taxon>
        <taxon>Vibrionales</taxon>
        <taxon>Vibrionaceae</taxon>
        <taxon>Vibrio</taxon>
    </lineage>
</organism>
<accession>Q7ME78</accession>
<name>Y4806_VIBVY</name>
<reference key="1">
    <citation type="journal article" date="2003" name="Genome Res.">
        <title>Comparative genome analysis of Vibrio vulnificus, a marine pathogen.</title>
        <authorList>
            <person name="Chen C.-Y."/>
            <person name="Wu K.-M."/>
            <person name="Chang Y.-C."/>
            <person name="Chang C.-H."/>
            <person name="Tsai H.-C."/>
            <person name="Liao T.-L."/>
            <person name="Liu Y.-M."/>
            <person name="Chen H.-J."/>
            <person name="Shen A.B.-T."/>
            <person name="Li J.-C."/>
            <person name="Su T.-L."/>
            <person name="Shao C.-P."/>
            <person name="Lee C.-T."/>
            <person name="Hor L.-I."/>
            <person name="Tsai S.-F."/>
        </authorList>
    </citation>
    <scope>NUCLEOTIDE SEQUENCE [LARGE SCALE GENOMIC DNA]</scope>
    <source>
        <strain>YJ016</strain>
    </source>
</reference>